<dbReference type="EMBL" id="CP000875">
    <property type="protein sequence ID" value="ABX06826.1"/>
    <property type="molecule type" value="Genomic_DNA"/>
</dbReference>
<dbReference type="SMR" id="A9AXA6"/>
<dbReference type="FunCoup" id="A9AXA6">
    <property type="interactions" value="479"/>
</dbReference>
<dbReference type="STRING" id="316274.Haur_4194"/>
<dbReference type="KEGG" id="hau:Haur_4194"/>
<dbReference type="eggNOG" id="COG0468">
    <property type="taxonomic scope" value="Bacteria"/>
</dbReference>
<dbReference type="HOGENOM" id="CLU_040469_3_2_0"/>
<dbReference type="InParanoid" id="A9AXA6"/>
<dbReference type="Proteomes" id="UP000000787">
    <property type="component" value="Chromosome"/>
</dbReference>
<dbReference type="GO" id="GO:0005829">
    <property type="term" value="C:cytosol"/>
    <property type="evidence" value="ECO:0007669"/>
    <property type="project" value="TreeGrafter"/>
</dbReference>
<dbReference type="GO" id="GO:0005524">
    <property type="term" value="F:ATP binding"/>
    <property type="evidence" value="ECO:0007669"/>
    <property type="project" value="UniProtKB-UniRule"/>
</dbReference>
<dbReference type="GO" id="GO:0016887">
    <property type="term" value="F:ATP hydrolysis activity"/>
    <property type="evidence" value="ECO:0007669"/>
    <property type="project" value="InterPro"/>
</dbReference>
<dbReference type="GO" id="GO:0140664">
    <property type="term" value="F:ATP-dependent DNA damage sensor activity"/>
    <property type="evidence" value="ECO:0007669"/>
    <property type="project" value="InterPro"/>
</dbReference>
<dbReference type="GO" id="GO:0003684">
    <property type="term" value="F:damaged DNA binding"/>
    <property type="evidence" value="ECO:0007669"/>
    <property type="project" value="UniProtKB-UniRule"/>
</dbReference>
<dbReference type="GO" id="GO:0003697">
    <property type="term" value="F:single-stranded DNA binding"/>
    <property type="evidence" value="ECO:0007669"/>
    <property type="project" value="UniProtKB-UniRule"/>
</dbReference>
<dbReference type="GO" id="GO:0006310">
    <property type="term" value="P:DNA recombination"/>
    <property type="evidence" value="ECO:0007669"/>
    <property type="project" value="UniProtKB-UniRule"/>
</dbReference>
<dbReference type="GO" id="GO:0006281">
    <property type="term" value="P:DNA repair"/>
    <property type="evidence" value="ECO:0007669"/>
    <property type="project" value="UniProtKB-UniRule"/>
</dbReference>
<dbReference type="GO" id="GO:0009432">
    <property type="term" value="P:SOS response"/>
    <property type="evidence" value="ECO:0007669"/>
    <property type="project" value="UniProtKB-UniRule"/>
</dbReference>
<dbReference type="CDD" id="cd00983">
    <property type="entry name" value="RecA"/>
    <property type="match status" value="1"/>
</dbReference>
<dbReference type="FunFam" id="3.40.50.300:FF:000087">
    <property type="entry name" value="Recombinase RecA"/>
    <property type="match status" value="1"/>
</dbReference>
<dbReference type="Gene3D" id="3.40.50.300">
    <property type="entry name" value="P-loop containing nucleotide triphosphate hydrolases"/>
    <property type="match status" value="1"/>
</dbReference>
<dbReference type="HAMAP" id="MF_00268">
    <property type="entry name" value="RecA"/>
    <property type="match status" value="1"/>
</dbReference>
<dbReference type="InterPro" id="IPR003593">
    <property type="entry name" value="AAA+_ATPase"/>
</dbReference>
<dbReference type="InterPro" id="IPR013765">
    <property type="entry name" value="DNA_recomb/repair_RecA"/>
</dbReference>
<dbReference type="InterPro" id="IPR020584">
    <property type="entry name" value="DNA_recomb/repair_RecA_CS"/>
</dbReference>
<dbReference type="InterPro" id="IPR027417">
    <property type="entry name" value="P-loop_NTPase"/>
</dbReference>
<dbReference type="InterPro" id="IPR049261">
    <property type="entry name" value="RecA-like_C"/>
</dbReference>
<dbReference type="InterPro" id="IPR049428">
    <property type="entry name" value="RecA-like_N"/>
</dbReference>
<dbReference type="InterPro" id="IPR020588">
    <property type="entry name" value="RecA_ATP-bd"/>
</dbReference>
<dbReference type="InterPro" id="IPR023400">
    <property type="entry name" value="RecA_C_sf"/>
</dbReference>
<dbReference type="InterPro" id="IPR020587">
    <property type="entry name" value="RecA_monomer-monomer_interface"/>
</dbReference>
<dbReference type="NCBIfam" id="TIGR02012">
    <property type="entry name" value="tigrfam_recA"/>
    <property type="match status" value="1"/>
</dbReference>
<dbReference type="PANTHER" id="PTHR45900:SF1">
    <property type="entry name" value="MITOCHONDRIAL DNA REPAIR PROTEIN RECA HOMOLOG-RELATED"/>
    <property type="match status" value="1"/>
</dbReference>
<dbReference type="PANTHER" id="PTHR45900">
    <property type="entry name" value="RECA"/>
    <property type="match status" value="1"/>
</dbReference>
<dbReference type="Pfam" id="PF00154">
    <property type="entry name" value="RecA"/>
    <property type="match status" value="1"/>
</dbReference>
<dbReference type="Pfam" id="PF21096">
    <property type="entry name" value="RecA_C"/>
    <property type="match status" value="1"/>
</dbReference>
<dbReference type="PRINTS" id="PR00142">
    <property type="entry name" value="RECA"/>
</dbReference>
<dbReference type="SMART" id="SM00382">
    <property type="entry name" value="AAA"/>
    <property type="match status" value="1"/>
</dbReference>
<dbReference type="SUPFAM" id="SSF52540">
    <property type="entry name" value="P-loop containing nucleoside triphosphate hydrolases"/>
    <property type="match status" value="1"/>
</dbReference>
<dbReference type="SUPFAM" id="SSF54752">
    <property type="entry name" value="RecA protein, C-terminal domain"/>
    <property type="match status" value="1"/>
</dbReference>
<dbReference type="PROSITE" id="PS00321">
    <property type="entry name" value="RECA_1"/>
    <property type="match status" value="1"/>
</dbReference>
<dbReference type="PROSITE" id="PS50162">
    <property type="entry name" value="RECA_2"/>
    <property type="match status" value="1"/>
</dbReference>
<dbReference type="PROSITE" id="PS50163">
    <property type="entry name" value="RECA_3"/>
    <property type="match status" value="1"/>
</dbReference>
<reference key="1">
    <citation type="journal article" date="2011" name="Stand. Genomic Sci.">
        <title>Complete genome sequence of the filamentous gliding predatory bacterium Herpetosiphon aurantiacus type strain (114-95(T)).</title>
        <authorList>
            <person name="Kiss H."/>
            <person name="Nett M."/>
            <person name="Domin N."/>
            <person name="Martin K."/>
            <person name="Maresca J.A."/>
            <person name="Copeland A."/>
            <person name="Lapidus A."/>
            <person name="Lucas S."/>
            <person name="Berry K.W."/>
            <person name="Glavina Del Rio T."/>
            <person name="Dalin E."/>
            <person name="Tice H."/>
            <person name="Pitluck S."/>
            <person name="Richardson P."/>
            <person name="Bruce D."/>
            <person name="Goodwin L."/>
            <person name="Han C."/>
            <person name="Detter J.C."/>
            <person name="Schmutz J."/>
            <person name="Brettin T."/>
            <person name="Land M."/>
            <person name="Hauser L."/>
            <person name="Kyrpides N.C."/>
            <person name="Ivanova N."/>
            <person name="Goeker M."/>
            <person name="Woyke T."/>
            <person name="Klenk H.P."/>
            <person name="Bryant D.A."/>
        </authorList>
    </citation>
    <scope>NUCLEOTIDE SEQUENCE [LARGE SCALE GENOMIC DNA]</scope>
    <source>
        <strain>ATCC 23779 / DSM 785 / 114-95</strain>
    </source>
</reference>
<comment type="function">
    <text evidence="1">Can catalyze the hydrolysis of ATP in the presence of single-stranded DNA, the ATP-dependent uptake of single-stranded DNA by duplex DNA, and the ATP-dependent hybridization of homologous single-stranded DNAs. It interacts with LexA causing its activation and leading to its autocatalytic cleavage.</text>
</comment>
<comment type="subcellular location">
    <subcellularLocation>
        <location evidence="1">Cytoplasm</location>
    </subcellularLocation>
</comment>
<comment type="similarity">
    <text evidence="1">Belongs to the RecA family.</text>
</comment>
<gene>
    <name evidence="1" type="primary">recA</name>
    <name type="ordered locus">Haur_4194</name>
</gene>
<organism>
    <name type="scientific">Herpetosiphon aurantiacus (strain ATCC 23779 / DSM 785 / 114-95)</name>
    <dbReference type="NCBI Taxonomy" id="316274"/>
    <lineage>
        <taxon>Bacteria</taxon>
        <taxon>Bacillati</taxon>
        <taxon>Chloroflexota</taxon>
        <taxon>Chloroflexia</taxon>
        <taxon>Herpetosiphonales</taxon>
        <taxon>Herpetosiphonaceae</taxon>
        <taxon>Herpetosiphon</taxon>
    </lineage>
</organism>
<protein>
    <recommendedName>
        <fullName evidence="1">Protein RecA</fullName>
    </recommendedName>
    <alternativeName>
        <fullName evidence="1">Recombinase A</fullName>
    </alternativeName>
</protein>
<accession>A9AXA6</accession>
<feature type="chain" id="PRO_1000114341" description="Protein RecA">
    <location>
        <begin position="1"/>
        <end position="358"/>
    </location>
</feature>
<feature type="binding site" evidence="1">
    <location>
        <begin position="66"/>
        <end position="73"/>
    </location>
    <ligand>
        <name>ATP</name>
        <dbReference type="ChEBI" id="CHEBI:30616"/>
    </ligand>
</feature>
<sequence length="358" mass="38036">MAISPEKEKALAAALSQIDRQFGKGAIMRMSDQRLSIEAIPTGSIALDLALGVGGIPRGRVIEIYGPESSGKTTLTQHIVAETQKMGGVAAFIDAEHAFDPVYAANCGVNVEDLLVSQPDTGEQALEICETLVRSGAIDVIVVDSVAALVPRAEIEGDMGDSHVGLQARLMSQALRKLSGAVSKSRTALIFINQLRMKIGVMFGNPETTTGGNALKFYASVRLDIRKVESIKQGQDVTGARARVKVVKNKVAPPFRQAEFDIMYNEGISREGNIVDVGVTMEILRKSGAWFYLGDDRLGQGRENAKQFLKDNPALADEIEKMIRAASPGAPTAKVIVGAAAANGAAPADDGDGIFDDE</sequence>
<keyword id="KW-0067">ATP-binding</keyword>
<keyword id="KW-0963">Cytoplasm</keyword>
<keyword id="KW-0227">DNA damage</keyword>
<keyword id="KW-0233">DNA recombination</keyword>
<keyword id="KW-0234">DNA repair</keyword>
<keyword id="KW-0238">DNA-binding</keyword>
<keyword id="KW-0547">Nucleotide-binding</keyword>
<keyword id="KW-0742">SOS response</keyword>
<proteinExistence type="inferred from homology"/>
<evidence type="ECO:0000255" key="1">
    <source>
        <dbReference type="HAMAP-Rule" id="MF_00268"/>
    </source>
</evidence>
<name>RECA_HERA2</name>